<feature type="initiator methionine" description="Removed" evidence="12">
    <location>
        <position position="1"/>
    </location>
</feature>
<feature type="chain" id="PRO_0000215585" description="Patellin-1">
    <location>
        <begin position="2"/>
        <end position="573"/>
    </location>
</feature>
<feature type="domain" description="CRAL-TRIO" evidence="3">
    <location>
        <begin position="295"/>
        <end position="468"/>
    </location>
</feature>
<feature type="domain" description="GOLD" evidence="4">
    <location>
        <begin position="471"/>
        <end position="572"/>
    </location>
</feature>
<feature type="region of interest" description="Disordered" evidence="5">
    <location>
        <begin position="1"/>
        <end position="74"/>
    </location>
</feature>
<feature type="region of interest" description="Disordered" evidence="5">
    <location>
        <begin position="111"/>
        <end position="202"/>
    </location>
</feature>
<feature type="coiled-coil region" evidence="2">
    <location>
        <begin position="89"/>
        <end position="157"/>
    </location>
</feature>
<feature type="compositionally biased region" description="Basic and acidic residues" evidence="5">
    <location>
        <begin position="18"/>
        <end position="28"/>
    </location>
</feature>
<feature type="compositionally biased region" description="Basic and acidic residues" evidence="5">
    <location>
        <begin position="35"/>
        <end position="74"/>
    </location>
</feature>
<feature type="compositionally biased region" description="Basic and acidic residues" evidence="5">
    <location>
        <begin position="120"/>
        <end position="169"/>
    </location>
</feature>
<feature type="compositionally biased region" description="Basic and acidic residues" evidence="5">
    <location>
        <begin position="176"/>
        <end position="190"/>
    </location>
</feature>
<feature type="modified residue" description="N-acetylalanine" evidence="12">
    <location>
        <position position="2"/>
    </location>
</feature>
<feature type="modified residue" description="Phosphothreonine" evidence="11">
    <location>
        <position position="29"/>
    </location>
</feature>
<feature type="modified residue" description="Phosphothreonine" evidence="10">
    <location>
        <position position="118"/>
    </location>
</feature>
<feature type="modified residue" description="Phosphoserine" evidence="1">
    <location>
        <position position="195"/>
    </location>
</feature>
<feature type="cross-link" description="Glycyl lysine isopeptide (Lys-Gly) (interchain with G-Cter in ubiquitin)" evidence="7">
    <location>
        <position position="285"/>
    </location>
</feature>
<accession>Q56WK6</accession>
<accession>Q9C7U0</accession>
<evidence type="ECO:0000250" key="1">
    <source>
        <dbReference type="UniProtKB" id="Q56Z59"/>
    </source>
</evidence>
<evidence type="ECO:0000255" key="2"/>
<evidence type="ECO:0000255" key="3">
    <source>
        <dbReference type="PROSITE-ProRule" id="PRU00056"/>
    </source>
</evidence>
<evidence type="ECO:0000255" key="4">
    <source>
        <dbReference type="PROSITE-ProRule" id="PRU00096"/>
    </source>
</evidence>
<evidence type="ECO:0000256" key="5">
    <source>
        <dbReference type="SAM" id="MobiDB-lite"/>
    </source>
</evidence>
<evidence type="ECO:0000269" key="6">
    <source>
    </source>
</evidence>
<evidence type="ECO:0000269" key="7">
    <source>
    </source>
</evidence>
<evidence type="ECO:0000269" key="8">
    <source>
    </source>
</evidence>
<evidence type="ECO:0000305" key="9"/>
<evidence type="ECO:0007744" key="10">
    <source>
    </source>
</evidence>
<evidence type="ECO:0007744" key="11">
    <source>
    </source>
</evidence>
<evidence type="ECO:0007744" key="12">
    <source>
    </source>
</evidence>
<reference key="1">
    <citation type="journal article" date="2000" name="Nature">
        <title>Sequence and analysis of chromosome 1 of the plant Arabidopsis thaliana.</title>
        <authorList>
            <person name="Theologis A."/>
            <person name="Ecker J.R."/>
            <person name="Palm C.J."/>
            <person name="Federspiel N.A."/>
            <person name="Kaul S."/>
            <person name="White O."/>
            <person name="Alonso J."/>
            <person name="Altafi H."/>
            <person name="Araujo R."/>
            <person name="Bowman C.L."/>
            <person name="Brooks S.Y."/>
            <person name="Buehler E."/>
            <person name="Chan A."/>
            <person name="Chao Q."/>
            <person name="Chen H."/>
            <person name="Cheuk R.F."/>
            <person name="Chin C.W."/>
            <person name="Chung M.K."/>
            <person name="Conn L."/>
            <person name="Conway A.B."/>
            <person name="Conway A.R."/>
            <person name="Creasy T.H."/>
            <person name="Dewar K."/>
            <person name="Dunn P."/>
            <person name="Etgu P."/>
            <person name="Feldblyum T.V."/>
            <person name="Feng J.-D."/>
            <person name="Fong B."/>
            <person name="Fujii C.Y."/>
            <person name="Gill J.E."/>
            <person name="Goldsmith A.D."/>
            <person name="Haas B."/>
            <person name="Hansen N.F."/>
            <person name="Hughes B."/>
            <person name="Huizar L."/>
            <person name="Hunter J.L."/>
            <person name="Jenkins J."/>
            <person name="Johnson-Hopson C."/>
            <person name="Khan S."/>
            <person name="Khaykin E."/>
            <person name="Kim C.J."/>
            <person name="Koo H.L."/>
            <person name="Kremenetskaia I."/>
            <person name="Kurtz D.B."/>
            <person name="Kwan A."/>
            <person name="Lam B."/>
            <person name="Langin-Hooper S."/>
            <person name="Lee A."/>
            <person name="Lee J.M."/>
            <person name="Lenz C.A."/>
            <person name="Li J.H."/>
            <person name="Li Y.-P."/>
            <person name="Lin X."/>
            <person name="Liu S.X."/>
            <person name="Liu Z.A."/>
            <person name="Luros J.S."/>
            <person name="Maiti R."/>
            <person name="Marziali A."/>
            <person name="Militscher J."/>
            <person name="Miranda M."/>
            <person name="Nguyen M."/>
            <person name="Nierman W.C."/>
            <person name="Osborne B.I."/>
            <person name="Pai G."/>
            <person name="Peterson J."/>
            <person name="Pham P.K."/>
            <person name="Rizzo M."/>
            <person name="Rooney T."/>
            <person name="Rowley D."/>
            <person name="Sakano H."/>
            <person name="Salzberg S.L."/>
            <person name="Schwartz J.R."/>
            <person name="Shinn P."/>
            <person name="Southwick A.M."/>
            <person name="Sun H."/>
            <person name="Tallon L.J."/>
            <person name="Tambunga G."/>
            <person name="Toriumi M.J."/>
            <person name="Town C.D."/>
            <person name="Utterback T."/>
            <person name="Van Aken S."/>
            <person name="Vaysberg M."/>
            <person name="Vysotskaia V.S."/>
            <person name="Walker M."/>
            <person name="Wu D."/>
            <person name="Yu G."/>
            <person name="Fraser C.M."/>
            <person name="Venter J.C."/>
            <person name="Davis R.W."/>
        </authorList>
    </citation>
    <scope>NUCLEOTIDE SEQUENCE [LARGE SCALE GENOMIC DNA]</scope>
    <source>
        <strain>cv. Columbia</strain>
    </source>
</reference>
<reference key="2">
    <citation type="journal article" date="2017" name="Plant J.">
        <title>Araport11: a complete reannotation of the Arabidopsis thaliana reference genome.</title>
        <authorList>
            <person name="Cheng C.Y."/>
            <person name="Krishnakumar V."/>
            <person name="Chan A.P."/>
            <person name="Thibaud-Nissen F."/>
            <person name="Schobel S."/>
            <person name="Town C.D."/>
        </authorList>
    </citation>
    <scope>GENOME REANNOTATION</scope>
    <source>
        <strain>cv. Columbia</strain>
    </source>
</reference>
<reference key="3">
    <citation type="journal article" date="2003" name="Science">
        <title>Empirical analysis of transcriptional activity in the Arabidopsis genome.</title>
        <authorList>
            <person name="Yamada K."/>
            <person name="Lim J."/>
            <person name="Dale J.M."/>
            <person name="Chen H."/>
            <person name="Shinn P."/>
            <person name="Palm C.J."/>
            <person name="Southwick A.M."/>
            <person name="Wu H.C."/>
            <person name="Kim C.J."/>
            <person name="Nguyen M."/>
            <person name="Pham P.K."/>
            <person name="Cheuk R.F."/>
            <person name="Karlin-Newmann G."/>
            <person name="Liu S.X."/>
            <person name="Lam B."/>
            <person name="Sakano H."/>
            <person name="Wu T."/>
            <person name="Yu G."/>
            <person name="Miranda M."/>
            <person name="Quach H.L."/>
            <person name="Tripp M."/>
            <person name="Chang C.H."/>
            <person name="Lee J.M."/>
            <person name="Toriumi M.J."/>
            <person name="Chan M.M."/>
            <person name="Tang C.C."/>
            <person name="Onodera C.S."/>
            <person name="Deng J.M."/>
            <person name="Akiyama K."/>
            <person name="Ansari Y."/>
            <person name="Arakawa T."/>
            <person name="Banh J."/>
            <person name="Banno F."/>
            <person name="Bowser L."/>
            <person name="Brooks S.Y."/>
            <person name="Carninci P."/>
            <person name="Chao Q."/>
            <person name="Choy N."/>
            <person name="Enju A."/>
            <person name="Goldsmith A.D."/>
            <person name="Gurjal M."/>
            <person name="Hansen N.F."/>
            <person name="Hayashizaki Y."/>
            <person name="Johnson-Hopson C."/>
            <person name="Hsuan V.W."/>
            <person name="Iida K."/>
            <person name="Karnes M."/>
            <person name="Khan S."/>
            <person name="Koesema E."/>
            <person name="Ishida J."/>
            <person name="Jiang P.X."/>
            <person name="Jones T."/>
            <person name="Kawai J."/>
            <person name="Kamiya A."/>
            <person name="Meyers C."/>
            <person name="Nakajima M."/>
            <person name="Narusaka M."/>
            <person name="Seki M."/>
            <person name="Sakurai T."/>
            <person name="Satou M."/>
            <person name="Tamse R."/>
            <person name="Vaysberg M."/>
            <person name="Wallender E.K."/>
            <person name="Wong C."/>
            <person name="Yamamura Y."/>
            <person name="Yuan S."/>
            <person name="Shinozaki K."/>
            <person name="Davis R.W."/>
            <person name="Theologis A."/>
            <person name="Ecker J.R."/>
        </authorList>
    </citation>
    <scope>NUCLEOTIDE SEQUENCE [LARGE SCALE MRNA]</scope>
    <source>
        <strain>cv. Columbia</strain>
    </source>
</reference>
<reference key="4">
    <citation type="submission" date="2005-03" db="EMBL/GenBank/DDBJ databases">
        <title>Large-scale analysis of RIKEN Arabidopsis full-length (RAFL) cDNAs.</title>
        <authorList>
            <person name="Totoki Y."/>
            <person name="Seki M."/>
            <person name="Ishida J."/>
            <person name="Nakajima M."/>
            <person name="Enju A."/>
            <person name="Kamiya A."/>
            <person name="Narusaka M."/>
            <person name="Shin-i T."/>
            <person name="Nakagawa M."/>
            <person name="Sakamoto N."/>
            <person name="Oishi K."/>
            <person name="Kohara Y."/>
            <person name="Kobayashi M."/>
            <person name="Toyoda A."/>
            <person name="Sakaki Y."/>
            <person name="Sakurai T."/>
            <person name="Iida K."/>
            <person name="Akiyama K."/>
            <person name="Satou M."/>
            <person name="Toyoda T."/>
            <person name="Konagaya A."/>
            <person name="Carninci P."/>
            <person name="Kawai J."/>
            <person name="Hayashizaki Y."/>
            <person name="Shinozaki K."/>
        </authorList>
    </citation>
    <scope>NUCLEOTIDE SEQUENCE [LARGE SCALE MRNA] OF 346-573</scope>
    <source>
        <strain>cv. Columbia</strain>
    </source>
</reference>
<reference key="5">
    <citation type="journal article" date="2004" name="Plant Physiol.">
        <title>Patellin1, a novel Sec14-like protein, localizes to the cell plate and binds phosphoinositides.</title>
        <authorList>
            <person name="Peterman T.K."/>
            <person name="Ohol Y.M."/>
            <person name="McReynolds L.J."/>
            <person name="Luna E.J."/>
        </authorList>
    </citation>
    <scope>FUNCTION</scope>
    <scope>SUBCELLULAR LOCATION</scope>
    <scope>TISSUE SPECIFICITY</scope>
    <scope>DEVELOPMENTAL STAGE</scope>
    <scope>GENE FAMILY</scope>
    <scope>NOMENCLATURE</scope>
</reference>
<reference key="6">
    <citation type="journal article" date="2009" name="Plant J.">
        <title>Tandem affinity purification and mass spectrometric analysis of ubiquitylated proteins in Arabidopsis.</title>
        <authorList>
            <person name="Saracco S.A."/>
            <person name="Hansson M."/>
            <person name="Scalf M."/>
            <person name="Walker J.M."/>
            <person name="Smith L.M."/>
            <person name="Vierstra R.D."/>
        </authorList>
    </citation>
    <scope>UBIQUITINATION [LARGE SCALE ANALYSIS] AT LYS-285</scope>
    <scope>IDENTIFICATION BY MASS SPECTROMETRY</scope>
</reference>
<reference key="7">
    <citation type="journal article" date="2009" name="Plant Physiol.">
        <title>Large-scale Arabidopsis phosphoproteome profiling reveals novel chloroplast kinase substrates and phosphorylation networks.</title>
        <authorList>
            <person name="Reiland S."/>
            <person name="Messerli G."/>
            <person name="Baerenfaller K."/>
            <person name="Gerrits B."/>
            <person name="Endler A."/>
            <person name="Grossmann J."/>
            <person name="Gruissem W."/>
            <person name="Baginsky S."/>
        </authorList>
    </citation>
    <scope>PHOSPHORYLATION [LARGE SCALE ANALYSIS] AT THR-118</scope>
    <scope>IDENTIFICATION BY MASS SPECTROMETRY [LARGE SCALE ANALYSIS]</scope>
</reference>
<reference key="8">
    <citation type="journal article" date="2010" name="Plant Cell">
        <title>The deubiquitinating enzyme AMSH3 is required for intracellular trafficking and vacuole biogenesis in Arabidopsis thaliana.</title>
        <authorList>
            <person name="Isono E."/>
            <person name="Katsiarimpa A."/>
            <person name="Mueller I.K."/>
            <person name="Anzenberger F."/>
            <person name="Stierhof Y.-D."/>
            <person name="Geldner N."/>
            <person name="Chory J."/>
            <person name="Schwechheimer C."/>
        </authorList>
    </citation>
    <scope>INTERACTION WITH AMSH3</scope>
</reference>
<reference key="9">
    <citation type="journal article" date="2012" name="J. Proteome Res.">
        <title>Identification of phosphoproteins in Arabidopsis thaliana leaves using polyethylene glycol fractionation, immobilized metal-ion affinity chromatography, two-dimensional gel electrophoresis and mass spectrometry.</title>
        <authorList>
            <person name="Aryal U.K."/>
            <person name="Krochko J.E."/>
            <person name="Ross A.R."/>
        </authorList>
    </citation>
    <scope>PHOSPHORYLATION [LARGE SCALE ANALYSIS] AT THR-29</scope>
    <scope>IDENTIFICATION BY MASS SPECTROMETRY [LARGE SCALE ANALYSIS]</scope>
</reference>
<reference key="10">
    <citation type="journal article" date="2012" name="Mol. Cell. Proteomics">
        <title>Comparative large-scale characterisation of plant vs. mammal proteins reveals similar and idiosyncratic N-alpha acetylation features.</title>
        <authorList>
            <person name="Bienvenut W.V."/>
            <person name="Sumpton D."/>
            <person name="Martinez A."/>
            <person name="Lilla S."/>
            <person name="Espagne C."/>
            <person name="Meinnel T."/>
            <person name="Giglione C."/>
        </authorList>
    </citation>
    <scope>ACETYLATION [LARGE SCALE ANALYSIS] AT ALA-2</scope>
    <scope>CLEAVAGE OF INITIATOR METHIONINE [LARGE SCALE ANALYSIS]</scope>
    <scope>IDENTIFICATION BY MASS SPECTROMETRY [LARGE SCALE ANALYSIS]</scope>
</reference>
<dbReference type="EMBL" id="AC067754">
    <property type="protein sequence ID" value="AAG51793.1"/>
    <property type="molecule type" value="Genomic_DNA"/>
</dbReference>
<dbReference type="EMBL" id="CP002684">
    <property type="protein sequence ID" value="AEE35282.1"/>
    <property type="molecule type" value="Genomic_DNA"/>
</dbReference>
<dbReference type="EMBL" id="AY045913">
    <property type="protein sequence ID" value="AAK76587.1"/>
    <property type="molecule type" value="mRNA"/>
</dbReference>
<dbReference type="EMBL" id="AY113865">
    <property type="protein sequence ID" value="AAM44913.1"/>
    <property type="molecule type" value="mRNA"/>
</dbReference>
<dbReference type="EMBL" id="AK222034">
    <property type="protein sequence ID" value="BAD94747.1"/>
    <property type="molecule type" value="mRNA"/>
</dbReference>
<dbReference type="PIR" id="H96744">
    <property type="entry name" value="H96744"/>
</dbReference>
<dbReference type="RefSeq" id="NP_177360.1">
    <property type="nucleotide sequence ID" value="NM_105873.3"/>
</dbReference>
<dbReference type="SMR" id="Q56WK6"/>
<dbReference type="BioGRID" id="28766">
    <property type="interactions" value="8"/>
</dbReference>
<dbReference type="FunCoup" id="Q56WK6">
    <property type="interactions" value="511"/>
</dbReference>
<dbReference type="IntAct" id="Q56WK6">
    <property type="interactions" value="2"/>
</dbReference>
<dbReference type="MINT" id="Q56WK6"/>
<dbReference type="STRING" id="3702.Q56WK6"/>
<dbReference type="iPTMnet" id="Q56WK6"/>
<dbReference type="MetOSite" id="Q56WK6"/>
<dbReference type="PaxDb" id="3702-AT1G72150.1"/>
<dbReference type="ProteomicsDB" id="236435"/>
<dbReference type="EnsemblPlants" id="AT1G72150.1">
    <property type="protein sequence ID" value="AT1G72150.1"/>
    <property type="gene ID" value="AT1G72150"/>
</dbReference>
<dbReference type="GeneID" id="843546"/>
<dbReference type="Gramene" id="AT1G72150.1">
    <property type="protein sequence ID" value="AT1G72150.1"/>
    <property type="gene ID" value="AT1G72150"/>
</dbReference>
<dbReference type="KEGG" id="ath:AT1G72150"/>
<dbReference type="Araport" id="AT1G72150"/>
<dbReference type="TAIR" id="AT1G72150">
    <property type="gene designation" value="PATL1"/>
</dbReference>
<dbReference type="eggNOG" id="KOG1471">
    <property type="taxonomic scope" value="Eukaryota"/>
</dbReference>
<dbReference type="HOGENOM" id="CLU_023762_1_0_1"/>
<dbReference type="InParanoid" id="Q56WK6"/>
<dbReference type="OMA" id="PYRMIQV"/>
<dbReference type="PhylomeDB" id="Q56WK6"/>
<dbReference type="PRO" id="PR:Q56WK6"/>
<dbReference type="Proteomes" id="UP000006548">
    <property type="component" value="Chromosome 1"/>
</dbReference>
<dbReference type="ExpressionAtlas" id="Q56WK6">
    <property type="expression patterns" value="baseline and differential"/>
</dbReference>
<dbReference type="GO" id="GO:0048046">
    <property type="term" value="C:apoplast"/>
    <property type="evidence" value="ECO:0007005"/>
    <property type="project" value="TAIR"/>
</dbReference>
<dbReference type="GO" id="GO:0005794">
    <property type="term" value="C:Golgi apparatus"/>
    <property type="evidence" value="ECO:0007005"/>
    <property type="project" value="TAIR"/>
</dbReference>
<dbReference type="GO" id="GO:0005739">
    <property type="term" value="C:mitochondrion"/>
    <property type="evidence" value="ECO:0007005"/>
    <property type="project" value="TAIR"/>
</dbReference>
<dbReference type="GO" id="GO:0005886">
    <property type="term" value="C:plasma membrane"/>
    <property type="evidence" value="ECO:0007005"/>
    <property type="project" value="TAIR"/>
</dbReference>
<dbReference type="GO" id="GO:0009506">
    <property type="term" value="C:plasmodesma"/>
    <property type="evidence" value="ECO:0007005"/>
    <property type="project" value="TAIR"/>
</dbReference>
<dbReference type="GO" id="GO:0005773">
    <property type="term" value="C:vacuole"/>
    <property type="evidence" value="ECO:0007005"/>
    <property type="project" value="TAIR"/>
</dbReference>
<dbReference type="GO" id="GO:0008289">
    <property type="term" value="F:lipid binding"/>
    <property type="evidence" value="ECO:0007669"/>
    <property type="project" value="UniProtKB-KW"/>
</dbReference>
<dbReference type="GO" id="GO:0002020">
    <property type="term" value="F:protease binding"/>
    <property type="evidence" value="ECO:0000353"/>
    <property type="project" value="UniProtKB"/>
</dbReference>
<dbReference type="GO" id="GO:1901149">
    <property type="term" value="F:salicylic acid binding"/>
    <property type="evidence" value="ECO:0007005"/>
    <property type="project" value="TAIR"/>
</dbReference>
<dbReference type="GO" id="GO:0051301">
    <property type="term" value="P:cell division"/>
    <property type="evidence" value="ECO:0007669"/>
    <property type="project" value="UniProtKB-KW"/>
</dbReference>
<dbReference type="GO" id="GO:0009860">
    <property type="term" value="P:pollen tube growth"/>
    <property type="evidence" value="ECO:0000270"/>
    <property type="project" value="TAIR"/>
</dbReference>
<dbReference type="CDD" id="cd00170">
    <property type="entry name" value="SEC14"/>
    <property type="match status" value="1"/>
</dbReference>
<dbReference type="FunFam" id="2.60.120.680:FF:000008">
    <property type="entry name" value="PATELLIN 2"/>
    <property type="match status" value="1"/>
</dbReference>
<dbReference type="Gene3D" id="3.40.525.10">
    <property type="entry name" value="CRAL-TRIO lipid binding domain"/>
    <property type="match status" value="1"/>
</dbReference>
<dbReference type="Gene3D" id="2.60.120.680">
    <property type="entry name" value="GOLD domain"/>
    <property type="match status" value="1"/>
</dbReference>
<dbReference type="Gene3D" id="1.10.8.20">
    <property type="entry name" value="N-terminal domain of phosphatidylinositol transfer protein sec14p"/>
    <property type="match status" value="1"/>
</dbReference>
<dbReference type="InterPro" id="IPR001251">
    <property type="entry name" value="CRAL-TRIO_dom"/>
</dbReference>
<dbReference type="InterPro" id="IPR036865">
    <property type="entry name" value="CRAL-TRIO_dom_sf"/>
</dbReference>
<dbReference type="InterPro" id="IPR011074">
    <property type="entry name" value="CRAL/TRIO_N_dom"/>
</dbReference>
<dbReference type="InterPro" id="IPR036273">
    <property type="entry name" value="CRAL/TRIO_N_dom_sf"/>
</dbReference>
<dbReference type="InterPro" id="IPR009038">
    <property type="entry name" value="GOLD_dom"/>
</dbReference>
<dbReference type="InterPro" id="IPR036598">
    <property type="entry name" value="GOLD_dom_sf"/>
</dbReference>
<dbReference type="InterPro" id="IPR044834">
    <property type="entry name" value="PATL"/>
</dbReference>
<dbReference type="InterPro" id="IPR056794">
    <property type="entry name" value="PATL1-6_C_GOLD"/>
</dbReference>
<dbReference type="PANTHER" id="PTHR45932">
    <property type="entry name" value="PATELLIN-1"/>
    <property type="match status" value="1"/>
</dbReference>
<dbReference type="PANTHER" id="PTHR45932:SF28">
    <property type="entry name" value="PATELLIN-1"/>
    <property type="match status" value="1"/>
</dbReference>
<dbReference type="Pfam" id="PF00650">
    <property type="entry name" value="CRAL_TRIO"/>
    <property type="match status" value="1"/>
</dbReference>
<dbReference type="Pfam" id="PF03765">
    <property type="entry name" value="CRAL_TRIO_N"/>
    <property type="match status" value="1"/>
</dbReference>
<dbReference type="Pfam" id="PF25099">
    <property type="entry name" value="GOLD_PATL1_C"/>
    <property type="match status" value="1"/>
</dbReference>
<dbReference type="SMART" id="SM01100">
    <property type="entry name" value="CRAL_TRIO_N"/>
    <property type="match status" value="1"/>
</dbReference>
<dbReference type="SMART" id="SM00516">
    <property type="entry name" value="SEC14"/>
    <property type="match status" value="1"/>
</dbReference>
<dbReference type="SUPFAM" id="SSF52087">
    <property type="entry name" value="CRAL/TRIO domain"/>
    <property type="match status" value="1"/>
</dbReference>
<dbReference type="SUPFAM" id="SSF46938">
    <property type="entry name" value="CRAL/TRIO N-terminal domain"/>
    <property type="match status" value="1"/>
</dbReference>
<dbReference type="SUPFAM" id="SSF101576">
    <property type="entry name" value="Supernatant protein factor (SPF), C-terminal domain"/>
    <property type="match status" value="1"/>
</dbReference>
<dbReference type="PROSITE" id="PS50191">
    <property type="entry name" value="CRAL_TRIO"/>
    <property type="match status" value="1"/>
</dbReference>
<dbReference type="PROSITE" id="PS50866">
    <property type="entry name" value="GOLD"/>
    <property type="match status" value="1"/>
</dbReference>
<proteinExistence type="evidence at protein level"/>
<comment type="function">
    <text evidence="6">Carrier protein that may be involved in membrane-trafficking events associated with cell plate formation during cytokinesis. Binds to some hydrophobic molecules and promotes their transfer between the different cellular sites. Binds to phosphoinositides with a preference for PtdIns(5)P, PtdIns(4,5)P2 and PtdIns(3)P.</text>
</comment>
<comment type="subunit">
    <text evidence="8">Interacts with the deubiquitinating enzyme AMSH3.</text>
</comment>
<comment type="subcellular location">
    <subcellularLocation>
        <location evidence="6">Membrane</location>
    </subcellularLocation>
    <subcellularLocation>
        <location evidence="6">Cytoplasm</location>
    </subcellularLocation>
    <text>Mainly membrane-associated. Also cytoplasmic. Cell plate during cell division.</text>
</comment>
<comment type="tissue specificity">
    <text evidence="6">Expressed ubiquitously with higher levels in expanding roots and leaves (at protein level).</text>
</comment>
<comment type="developmental stage">
    <text evidence="6">Accumulates during flower development (at protein level).</text>
</comment>
<comment type="miscellaneous">
    <text>'Patella' means 'small plate' in Latin.</text>
</comment>
<comment type="similarity">
    <text evidence="9">Belongs to the patellin family.</text>
</comment>
<organism>
    <name type="scientific">Arabidopsis thaliana</name>
    <name type="common">Mouse-ear cress</name>
    <dbReference type="NCBI Taxonomy" id="3702"/>
    <lineage>
        <taxon>Eukaryota</taxon>
        <taxon>Viridiplantae</taxon>
        <taxon>Streptophyta</taxon>
        <taxon>Embryophyta</taxon>
        <taxon>Tracheophyta</taxon>
        <taxon>Spermatophyta</taxon>
        <taxon>Magnoliopsida</taxon>
        <taxon>eudicotyledons</taxon>
        <taxon>Gunneridae</taxon>
        <taxon>Pentapetalae</taxon>
        <taxon>rosids</taxon>
        <taxon>malvids</taxon>
        <taxon>Brassicales</taxon>
        <taxon>Brassicaceae</taxon>
        <taxon>Camelineae</taxon>
        <taxon>Arabidopsis</taxon>
    </lineage>
</organism>
<name>PATL1_ARATH</name>
<sequence>MAQEEVQKSADVAAAPVVKEKPITDKEVTIPTPVAEKEEVAAPVSDEKAVPEKEVTPEKEAPAAEAEKSVSVKEEETVVVAEKVVVLTAEEVQKKALEEFKELVREALNKREFTAPVTPVKEEKTEEKKTEEETKEEEKTEEKKEETTTEVKVEEEKPAVPAAEEEKSSEAAPVETKSEEKPEEKAEVTTEKASSAEEDGTKTVEAIEESIVSVSPPESAVAPVVVETVAVAEAEPVEPEEVSIWGVPLLQDERSDVILTKFLRARDFKVKEALTMLKNTVQWRKENKIDELVESGEEVSEFEKMVFAHGVDKEGHVVIYSSYGEFQNKELFSDKEKLNKFLSWRIQLQEKCVRAIDFSNPEAKSSFVFVSDFRNAPGLGKRALWQFIRRAVKQFEDNYPEFAAKELFINVPWWYIPYYKTFGSIITSPRTRSKMVLAGPSKSADTIFKYIAPEQVPVKYGGLSKDTPLTEETITEAIVKPAANYTIELPASEACTLSWELRVLGADVSYGAQFEPTTEGSYAVIVSKTRKIGSTDEPVITDSFKVGEPGKIVITIDNQTSKKKKVLYRFKTQ</sequence>
<keyword id="KW-0007">Acetylation</keyword>
<keyword id="KW-0131">Cell cycle</keyword>
<keyword id="KW-0132">Cell division</keyword>
<keyword id="KW-0175">Coiled coil</keyword>
<keyword id="KW-0963">Cytoplasm</keyword>
<keyword id="KW-1017">Isopeptide bond</keyword>
<keyword id="KW-0446">Lipid-binding</keyword>
<keyword id="KW-0472">Membrane</keyword>
<keyword id="KW-0597">Phosphoprotein</keyword>
<keyword id="KW-1185">Reference proteome</keyword>
<keyword id="KW-0813">Transport</keyword>
<keyword id="KW-0832">Ubl conjugation</keyword>
<protein>
    <recommendedName>
        <fullName>Patellin-1</fullName>
    </recommendedName>
</protein>
<gene>
    <name type="primary">PATL1</name>
    <name type="ordered locus">At1g72150</name>
    <name type="ORF">T9N14.1</name>
</gene>